<evidence type="ECO:0000250" key="1"/>
<evidence type="ECO:0000255" key="2"/>
<evidence type="ECO:0000305" key="3"/>
<evidence type="ECO:0000312" key="4">
    <source>
        <dbReference type="FlyBase" id="FBgn0034380"/>
    </source>
</evidence>
<name>VPS51_DROME</name>
<dbReference type="EMBL" id="AE013599">
    <property type="protein sequence ID" value="AAF57649.3"/>
    <property type="molecule type" value="Genomic_DNA"/>
</dbReference>
<dbReference type="EMBL" id="AY118494">
    <property type="protein sequence ID" value="AAM49863.1"/>
    <property type="molecule type" value="mRNA"/>
</dbReference>
<dbReference type="RefSeq" id="NP_611363.2">
    <property type="nucleotide sequence ID" value="NM_137519.3"/>
</dbReference>
<dbReference type="SMR" id="Q8MSY4"/>
<dbReference type="BioGRID" id="62828">
    <property type="interactions" value="12"/>
</dbReference>
<dbReference type="ComplexPortal" id="CPX-2788">
    <property type="entry name" value="GARP tethering complex, Vps50 variant"/>
</dbReference>
<dbReference type="ComplexPortal" id="CPX-2793">
    <property type="entry name" value="GARP tethering complex, Vps54 variant"/>
</dbReference>
<dbReference type="FunCoup" id="Q8MSY4">
    <property type="interactions" value="863"/>
</dbReference>
<dbReference type="IntAct" id="Q8MSY4">
    <property type="interactions" value="12"/>
</dbReference>
<dbReference type="STRING" id="7227.FBpp0085829"/>
<dbReference type="PaxDb" id="7227-FBpp0085829"/>
<dbReference type="DNASU" id="37156"/>
<dbReference type="EnsemblMetazoa" id="FBtr0086647">
    <property type="protein sequence ID" value="FBpp0085829"/>
    <property type="gene ID" value="FBgn0034380"/>
</dbReference>
<dbReference type="GeneID" id="37156"/>
<dbReference type="KEGG" id="dme:Dmel_CG15087"/>
<dbReference type="UCSC" id="CG15087-RA">
    <property type="organism name" value="d. melanogaster"/>
</dbReference>
<dbReference type="AGR" id="FB:FBgn0034380"/>
<dbReference type="CTD" id="738"/>
<dbReference type="FlyBase" id="FBgn0034380">
    <property type="gene designation" value="Vps51"/>
</dbReference>
<dbReference type="VEuPathDB" id="VectorBase:FBgn0034380"/>
<dbReference type="eggNOG" id="KOG2346">
    <property type="taxonomic scope" value="Eukaryota"/>
</dbReference>
<dbReference type="GeneTree" id="ENSGT00390000001738"/>
<dbReference type="HOGENOM" id="CLU_020677_0_0_1"/>
<dbReference type="InParanoid" id="Q8MSY4"/>
<dbReference type="OMA" id="DIICERG"/>
<dbReference type="OrthoDB" id="203678at2759"/>
<dbReference type="PhylomeDB" id="Q8MSY4"/>
<dbReference type="Reactome" id="R-DME-6811440">
    <property type="pathway name" value="Retrograde transport at the Trans-Golgi-Network"/>
</dbReference>
<dbReference type="BioGRID-ORCS" id="37156">
    <property type="hits" value="0 hits in 1 CRISPR screen"/>
</dbReference>
<dbReference type="GenomeRNAi" id="37156"/>
<dbReference type="PRO" id="PR:Q8MSY4"/>
<dbReference type="Proteomes" id="UP000000803">
    <property type="component" value="Chromosome 2R"/>
</dbReference>
<dbReference type="Bgee" id="FBgn0034380">
    <property type="expression patterns" value="Expressed in egg cell and 48 other cell types or tissues"/>
</dbReference>
<dbReference type="GO" id="GO:0005829">
    <property type="term" value="C:cytosol"/>
    <property type="evidence" value="ECO:0007669"/>
    <property type="project" value="GOC"/>
</dbReference>
<dbReference type="GO" id="GO:1990745">
    <property type="term" value="C:EARP complex"/>
    <property type="evidence" value="ECO:0000318"/>
    <property type="project" value="GO_Central"/>
</dbReference>
<dbReference type="GO" id="GO:0000938">
    <property type="term" value="C:GARP complex"/>
    <property type="evidence" value="ECO:0000250"/>
    <property type="project" value="FlyBase"/>
</dbReference>
<dbReference type="GO" id="GO:0016020">
    <property type="term" value="C:membrane"/>
    <property type="evidence" value="ECO:0000318"/>
    <property type="project" value="GO_Central"/>
</dbReference>
<dbReference type="GO" id="GO:0032456">
    <property type="term" value="P:endocytic recycling"/>
    <property type="evidence" value="ECO:0000250"/>
    <property type="project" value="FlyBase"/>
</dbReference>
<dbReference type="GO" id="GO:0007030">
    <property type="term" value="P:Golgi organization"/>
    <property type="evidence" value="ECO:0000318"/>
    <property type="project" value="GO_Central"/>
</dbReference>
<dbReference type="GO" id="GO:0048193">
    <property type="term" value="P:Golgi vesicle transport"/>
    <property type="evidence" value="ECO:0000318"/>
    <property type="project" value="GO_Central"/>
</dbReference>
<dbReference type="GO" id="GO:0007041">
    <property type="term" value="P:lysosomal transport"/>
    <property type="evidence" value="ECO:0000318"/>
    <property type="project" value="GO_Central"/>
</dbReference>
<dbReference type="GO" id="GO:0042147">
    <property type="term" value="P:retrograde transport, endosome to Golgi"/>
    <property type="evidence" value="ECO:0000318"/>
    <property type="project" value="GO_Central"/>
</dbReference>
<dbReference type="InterPro" id="IPR016159">
    <property type="entry name" value="Cullin_repeat-like_dom_sf"/>
</dbReference>
<dbReference type="InterPro" id="IPR014812">
    <property type="entry name" value="Vps51"/>
</dbReference>
<dbReference type="PANTHER" id="PTHR15954">
    <property type="entry name" value="VACUOLAR PROTEIN SORTING-ASSOCIATED PROTEIN 51 HOMOLOG"/>
    <property type="match status" value="1"/>
</dbReference>
<dbReference type="PANTHER" id="PTHR15954:SF4">
    <property type="entry name" value="VACUOLAR PROTEIN SORTING-ASSOCIATED PROTEIN 51 HOMOLOG"/>
    <property type="match status" value="1"/>
</dbReference>
<dbReference type="Pfam" id="PF08700">
    <property type="entry name" value="VPS51_Exo84_N"/>
    <property type="match status" value="1"/>
</dbReference>
<dbReference type="SUPFAM" id="SSF74788">
    <property type="entry name" value="Cullin repeat-like"/>
    <property type="match status" value="1"/>
</dbReference>
<sequence>MAETKANPFDMDSSSFDAEKYLERLLKDCSLKQIMDTEAAVVKDTQTLHSDMQTLVYENYNKFISATDTIRRMKDDFKQMETDVNLLMTKMQSITTFSEQITGTLQGTRSQLCRLSEKHSLLKRLQFLSTLPAKLKSLIEEQNYAQAVQDYLHAQKVFAQYGRQPSFDGIQRDCDAIMADLKEQLRSDFQRAGNTAQSLTEIGELLLQLDEKTSDLASEMLTCAGKRLHEQIVMLQDQTERDMLEFVDMGIDGFLNDLALVVTSYFDMFVAKHYEHERDDFQENALQELNVFLNQNIEKYLTLVQDRVESDIGYGDTQVMLRALDRLHRRLQAMRNICRGLEVQRNTVSIIISAAHQLCDAHAKNLKDHFADSLSAVRLSLVSAKSDAAAGLNLGDLISNLYVSMVEKIKGVLQDLLIFLRTDWSFNIKAEHKGALCVEGIRENLLIGFLRHIAKVMCGFGDASSSSPPNLLLVLSKTCLELEQQGVHILIALVDDLYEIDSENSATLTHETEICAEMRETAQSLLDAYVRLQGTNISQMLRKSVETRDWLNCLEPRSVRAVMKRVVEELGSIETVVASLYEANTNATSGFRTTASSDSSRKTYFSNFASTSKPQYRSNWSNYTPSQLESSYVSNIHRLFSERVEIFTSVEFTKASIIMGIIKIGLKTLLECVRLRTFSKFGLQQIQVDAHYLQMNLWRFVSDENLVNFLLDEILGSAVQRCLESVLMEPNAVEIICERG</sequence>
<gene>
    <name evidence="4" type="primary">Vps51</name>
    <name evidence="4" type="ORF">CG15087</name>
</gene>
<feature type="chain" id="PRO_0000361544" description="Vacuolar protein sorting-associated protein 51 homolog">
    <location>
        <begin position="1"/>
        <end position="740"/>
    </location>
</feature>
<feature type="coiled-coil region" evidence="2">
    <location>
        <begin position="65"/>
        <end position="87"/>
    </location>
</feature>
<feature type="coiled-coil region" evidence="2">
    <location>
        <begin position="322"/>
        <end position="344"/>
    </location>
</feature>
<reference key="1">
    <citation type="journal article" date="2000" name="Science">
        <title>The genome sequence of Drosophila melanogaster.</title>
        <authorList>
            <person name="Adams M.D."/>
            <person name="Celniker S.E."/>
            <person name="Holt R.A."/>
            <person name="Evans C.A."/>
            <person name="Gocayne J.D."/>
            <person name="Amanatides P.G."/>
            <person name="Scherer S.E."/>
            <person name="Li P.W."/>
            <person name="Hoskins R.A."/>
            <person name="Galle R.F."/>
            <person name="George R.A."/>
            <person name="Lewis S.E."/>
            <person name="Richards S."/>
            <person name="Ashburner M."/>
            <person name="Henderson S.N."/>
            <person name="Sutton G.G."/>
            <person name="Wortman J.R."/>
            <person name="Yandell M.D."/>
            <person name="Zhang Q."/>
            <person name="Chen L.X."/>
            <person name="Brandon R.C."/>
            <person name="Rogers Y.-H.C."/>
            <person name="Blazej R.G."/>
            <person name="Champe M."/>
            <person name="Pfeiffer B.D."/>
            <person name="Wan K.H."/>
            <person name="Doyle C."/>
            <person name="Baxter E.G."/>
            <person name="Helt G."/>
            <person name="Nelson C.R."/>
            <person name="Miklos G.L.G."/>
            <person name="Abril J.F."/>
            <person name="Agbayani A."/>
            <person name="An H.-J."/>
            <person name="Andrews-Pfannkoch C."/>
            <person name="Baldwin D."/>
            <person name="Ballew R.M."/>
            <person name="Basu A."/>
            <person name="Baxendale J."/>
            <person name="Bayraktaroglu L."/>
            <person name="Beasley E.M."/>
            <person name="Beeson K.Y."/>
            <person name="Benos P.V."/>
            <person name="Berman B.P."/>
            <person name="Bhandari D."/>
            <person name="Bolshakov S."/>
            <person name="Borkova D."/>
            <person name="Botchan M.R."/>
            <person name="Bouck J."/>
            <person name="Brokstein P."/>
            <person name="Brottier P."/>
            <person name="Burtis K.C."/>
            <person name="Busam D.A."/>
            <person name="Butler H."/>
            <person name="Cadieu E."/>
            <person name="Center A."/>
            <person name="Chandra I."/>
            <person name="Cherry J.M."/>
            <person name="Cawley S."/>
            <person name="Dahlke C."/>
            <person name="Davenport L.B."/>
            <person name="Davies P."/>
            <person name="de Pablos B."/>
            <person name="Delcher A."/>
            <person name="Deng Z."/>
            <person name="Mays A.D."/>
            <person name="Dew I."/>
            <person name="Dietz S.M."/>
            <person name="Dodson K."/>
            <person name="Doup L.E."/>
            <person name="Downes M."/>
            <person name="Dugan-Rocha S."/>
            <person name="Dunkov B.C."/>
            <person name="Dunn P."/>
            <person name="Durbin K.J."/>
            <person name="Evangelista C.C."/>
            <person name="Ferraz C."/>
            <person name="Ferriera S."/>
            <person name="Fleischmann W."/>
            <person name="Fosler C."/>
            <person name="Gabrielian A.E."/>
            <person name="Garg N.S."/>
            <person name="Gelbart W.M."/>
            <person name="Glasser K."/>
            <person name="Glodek A."/>
            <person name="Gong F."/>
            <person name="Gorrell J.H."/>
            <person name="Gu Z."/>
            <person name="Guan P."/>
            <person name="Harris M."/>
            <person name="Harris N.L."/>
            <person name="Harvey D.A."/>
            <person name="Heiman T.J."/>
            <person name="Hernandez J.R."/>
            <person name="Houck J."/>
            <person name="Hostin D."/>
            <person name="Houston K.A."/>
            <person name="Howland T.J."/>
            <person name="Wei M.-H."/>
            <person name="Ibegwam C."/>
            <person name="Jalali M."/>
            <person name="Kalush F."/>
            <person name="Karpen G.H."/>
            <person name="Ke Z."/>
            <person name="Kennison J.A."/>
            <person name="Ketchum K.A."/>
            <person name="Kimmel B.E."/>
            <person name="Kodira C.D."/>
            <person name="Kraft C.L."/>
            <person name="Kravitz S."/>
            <person name="Kulp D."/>
            <person name="Lai Z."/>
            <person name="Lasko P."/>
            <person name="Lei Y."/>
            <person name="Levitsky A.A."/>
            <person name="Li J.H."/>
            <person name="Li Z."/>
            <person name="Liang Y."/>
            <person name="Lin X."/>
            <person name="Liu X."/>
            <person name="Mattei B."/>
            <person name="McIntosh T.C."/>
            <person name="McLeod M.P."/>
            <person name="McPherson D."/>
            <person name="Merkulov G."/>
            <person name="Milshina N.V."/>
            <person name="Mobarry C."/>
            <person name="Morris J."/>
            <person name="Moshrefi A."/>
            <person name="Mount S.M."/>
            <person name="Moy M."/>
            <person name="Murphy B."/>
            <person name="Murphy L."/>
            <person name="Muzny D.M."/>
            <person name="Nelson D.L."/>
            <person name="Nelson D.R."/>
            <person name="Nelson K.A."/>
            <person name="Nixon K."/>
            <person name="Nusskern D.R."/>
            <person name="Pacleb J.M."/>
            <person name="Palazzolo M."/>
            <person name="Pittman G.S."/>
            <person name="Pan S."/>
            <person name="Pollard J."/>
            <person name="Puri V."/>
            <person name="Reese M.G."/>
            <person name="Reinert K."/>
            <person name="Remington K."/>
            <person name="Saunders R.D.C."/>
            <person name="Scheeler F."/>
            <person name="Shen H."/>
            <person name="Shue B.C."/>
            <person name="Siden-Kiamos I."/>
            <person name="Simpson M."/>
            <person name="Skupski M.P."/>
            <person name="Smith T.J."/>
            <person name="Spier E."/>
            <person name="Spradling A.C."/>
            <person name="Stapleton M."/>
            <person name="Strong R."/>
            <person name="Sun E."/>
            <person name="Svirskas R."/>
            <person name="Tector C."/>
            <person name="Turner R."/>
            <person name="Venter E."/>
            <person name="Wang A.H."/>
            <person name="Wang X."/>
            <person name="Wang Z.-Y."/>
            <person name="Wassarman D.A."/>
            <person name="Weinstock G.M."/>
            <person name="Weissenbach J."/>
            <person name="Williams S.M."/>
            <person name="Woodage T."/>
            <person name="Worley K.C."/>
            <person name="Wu D."/>
            <person name="Yang S."/>
            <person name="Yao Q.A."/>
            <person name="Ye J."/>
            <person name="Yeh R.-F."/>
            <person name="Zaveri J.S."/>
            <person name="Zhan M."/>
            <person name="Zhang G."/>
            <person name="Zhao Q."/>
            <person name="Zheng L."/>
            <person name="Zheng X.H."/>
            <person name="Zhong F.N."/>
            <person name="Zhong W."/>
            <person name="Zhou X."/>
            <person name="Zhu S.C."/>
            <person name="Zhu X."/>
            <person name="Smith H.O."/>
            <person name="Gibbs R.A."/>
            <person name="Myers E.W."/>
            <person name="Rubin G.M."/>
            <person name="Venter J.C."/>
        </authorList>
    </citation>
    <scope>NUCLEOTIDE SEQUENCE [LARGE SCALE GENOMIC DNA]</scope>
    <source>
        <strain>Berkeley</strain>
    </source>
</reference>
<reference key="2">
    <citation type="journal article" date="2002" name="Genome Biol.">
        <title>Annotation of the Drosophila melanogaster euchromatic genome: a systematic review.</title>
        <authorList>
            <person name="Misra S."/>
            <person name="Crosby M.A."/>
            <person name="Mungall C.J."/>
            <person name="Matthews B.B."/>
            <person name="Campbell K.S."/>
            <person name="Hradecky P."/>
            <person name="Huang Y."/>
            <person name="Kaminker J.S."/>
            <person name="Millburn G.H."/>
            <person name="Prochnik S.E."/>
            <person name="Smith C.D."/>
            <person name="Tupy J.L."/>
            <person name="Whitfield E.J."/>
            <person name="Bayraktaroglu L."/>
            <person name="Berman B.P."/>
            <person name="Bettencourt B.R."/>
            <person name="Celniker S.E."/>
            <person name="de Grey A.D.N.J."/>
            <person name="Drysdale R.A."/>
            <person name="Harris N.L."/>
            <person name="Richter J."/>
            <person name="Russo S."/>
            <person name="Schroeder A.J."/>
            <person name="Shu S.Q."/>
            <person name="Stapleton M."/>
            <person name="Yamada C."/>
            <person name="Ashburner M."/>
            <person name="Gelbart W.M."/>
            <person name="Rubin G.M."/>
            <person name="Lewis S.E."/>
        </authorList>
    </citation>
    <scope>GENOME REANNOTATION</scope>
    <source>
        <strain>Berkeley</strain>
    </source>
</reference>
<reference key="3">
    <citation type="journal article" date="2002" name="Genome Biol.">
        <title>A Drosophila full-length cDNA resource.</title>
        <authorList>
            <person name="Stapleton M."/>
            <person name="Carlson J.W."/>
            <person name="Brokstein P."/>
            <person name="Yu C."/>
            <person name="Champe M."/>
            <person name="George R.A."/>
            <person name="Guarin H."/>
            <person name="Kronmiller B."/>
            <person name="Pacleb J.M."/>
            <person name="Park S."/>
            <person name="Wan K.H."/>
            <person name="Rubin G.M."/>
            <person name="Celniker S.E."/>
        </authorList>
    </citation>
    <scope>NUCLEOTIDE SEQUENCE [LARGE SCALE MRNA]</scope>
    <source>
        <strain>Berkeley</strain>
        <tissue>Embryo</tissue>
    </source>
</reference>
<organism>
    <name type="scientific">Drosophila melanogaster</name>
    <name type="common">Fruit fly</name>
    <dbReference type="NCBI Taxonomy" id="7227"/>
    <lineage>
        <taxon>Eukaryota</taxon>
        <taxon>Metazoa</taxon>
        <taxon>Ecdysozoa</taxon>
        <taxon>Arthropoda</taxon>
        <taxon>Hexapoda</taxon>
        <taxon>Insecta</taxon>
        <taxon>Pterygota</taxon>
        <taxon>Neoptera</taxon>
        <taxon>Endopterygota</taxon>
        <taxon>Diptera</taxon>
        <taxon>Brachycera</taxon>
        <taxon>Muscomorpha</taxon>
        <taxon>Ephydroidea</taxon>
        <taxon>Drosophilidae</taxon>
        <taxon>Drosophila</taxon>
        <taxon>Sophophora</taxon>
    </lineage>
</organism>
<accession>Q8MSY4</accession>
<accession>Q9V8L5</accession>
<comment type="function">
    <text evidence="1">May act as a component of the GARP complex that is involved in retrograde transport from early and late endosomes to the trans-Golgi network (TGN).</text>
</comment>
<comment type="subunit">
    <text evidence="1">Component of the Golgi-associated retrograde protein (GARP) complex.</text>
</comment>
<comment type="similarity">
    <text evidence="3">Belongs to the VPS51 family.</text>
</comment>
<proteinExistence type="evidence at transcript level"/>
<keyword id="KW-0175">Coiled coil</keyword>
<keyword id="KW-1185">Reference proteome</keyword>
<protein>
    <recommendedName>
        <fullName>Vacuolar protein sorting-associated protein 51 homolog</fullName>
    </recommendedName>
    <alternativeName>
        <fullName>Protein fat-free homolog</fullName>
    </alternativeName>
</protein>